<organismHost>
    <name type="scientific">Bos taurus</name>
    <name type="common">Bovine</name>
    <dbReference type="NCBI Taxonomy" id="9913"/>
</organismHost>
<evidence type="ECO:0000250" key="1">
    <source>
        <dbReference type="UniProtKB" id="P0DOE9"/>
    </source>
</evidence>
<evidence type="ECO:0000305" key="2"/>
<organism>
    <name type="scientific">Bovine respiratory syncytial virus (strain A51908)</name>
    <name type="common">BRS</name>
    <dbReference type="NCBI Taxonomy" id="11247"/>
    <lineage>
        <taxon>Viruses</taxon>
        <taxon>Riboviria</taxon>
        <taxon>Orthornavirae</taxon>
        <taxon>Negarnaviricota</taxon>
        <taxon>Haploviricotina</taxon>
        <taxon>Monjiviricetes</taxon>
        <taxon>Mononegavirales</taxon>
        <taxon>Pneumoviridae</taxon>
        <taxon>Orthopneumovirus</taxon>
        <taxon>Orthopneumovirus bovis</taxon>
        <taxon>bovine respiratory syncytial virus</taxon>
    </lineage>
</organism>
<protein>
    <recommendedName>
        <fullName>Non-structural protein 1</fullName>
    </recommendedName>
    <alternativeName>
        <fullName>Non-structural protein 1C</fullName>
    </alternativeName>
</protein>
<proteinExistence type="evidence at transcript level"/>
<keyword id="KW-1035">Host cytoplasm</keyword>
<keyword id="KW-1045">Host mitochondrion</keyword>
<keyword id="KW-1048">Host nucleus</keyword>
<keyword id="KW-0945">Host-virus interaction</keyword>
<keyword id="KW-1080">Inhibition of host adaptive immune response by virus</keyword>
<keyword id="KW-1090">Inhibition of host innate immune response by virus</keyword>
<keyword id="KW-1114">Inhibition of host interferon signaling pathway by virus</keyword>
<keyword id="KW-1092">Inhibition of host IRF3 by virus</keyword>
<keyword id="KW-1093">Inhibition of host IRF7 by virus</keyword>
<keyword id="KW-1097">Inhibition of host MAVS by virus</keyword>
<keyword id="KW-1088">Inhibition of host RIG-I by virus</keyword>
<keyword id="KW-1113">Inhibition of host RLR pathway by virus</keyword>
<keyword id="KW-1106">Inhibition of host STAT2 by virus</keyword>
<keyword id="KW-1223">Inhibition of host TBK1 by virus</keyword>
<keyword id="KW-1225">Inhibition of host TLR pathway by virus</keyword>
<keyword id="KW-0922">Interferon antiviral system evasion</keyword>
<keyword id="KW-1119">Modulation of host cell apoptosis by virus</keyword>
<keyword id="KW-1185">Reference proteome</keyword>
<keyword id="KW-0899">Viral immunoevasion</keyword>
<name>NS1_BRSVA</name>
<sequence>MGSETLSVIQVRLRNIYDNDKVALLKITCHTNRLILLTHTLAKSVIHTIKLSGIVFIHIITSSDYCPTSDIINSANFTSMPILQNGGYIWELMELTHCFQTNGLIDDNCEITFSKRLSDSELAKYSNQLSTLLGLN</sequence>
<dbReference type="EMBL" id="U15937">
    <property type="protein sequence ID" value="AAA85671.1"/>
    <property type="molecule type" value="mRNA"/>
</dbReference>
<dbReference type="EMBL" id="AF295543">
    <property type="protein sequence ID" value="AAL49392.1"/>
    <property type="molecule type" value="Genomic_RNA"/>
</dbReference>
<dbReference type="EMBL" id="AF295544">
    <property type="protein sequence ID" value="AAL49403.1"/>
    <property type="molecule type" value="Genomic_RNA"/>
</dbReference>
<dbReference type="RefSeq" id="NP_048048.1">
    <property type="nucleotide sequence ID" value="NC_001989.1"/>
</dbReference>
<dbReference type="SMR" id="Q65694"/>
<dbReference type="GeneID" id="1489807"/>
<dbReference type="KEGG" id="vg:1489807"/>
<dbReference type="Proteomes" id="UP000007616">
    <property type="component" value="Genome"/>
</dbReference>
<dbReference type="GO" id="GO:0033650">
    <property type="term" value="C:host cell mitochondrion"/>
    <property type="evidence" value="ECO:0007669"/>
    <property type="project" value="UniProtKB-SubCell"/>
</dbReference>
<dbReference type="GO" id="GO:0042025">
    <property type="term" value="C:host cell nucleus"/>
    <property type="evidence" value="ECO:0007669"/>
    <property type="project" value="UniProtKB-SubCell"/>
</dbReference>
<dbReference type="GO" id="GO:0052150">
    <property type="term" value="P:symbiont-mediated perturbation of host apoptosis"/>
    <property type="evidence" value="ECO:0007669"/>
    <property type="project" value="UniProtKB-KW"/>
</dbReference>
<dbReference type="GO" id="GO:0039504">
    <property type="term" value="P:symbiont-mediated suppression of host adaptive immune response"/>
    <property type="evidence" value="ECO:0007669"/>
    <property type="project" value="UniProtKB-KW"/>
</dbReference>
<dbReference type="GO" id="GO:0039548">
    <property type="term" value="P:symbiont-mediated suppression of host cytoplasmic pattern recognition receptor signaling pathway via inhibition of IRF3 activity"/>
    <property type="evidence" value="ECO:0007669"/>
    <property type="project" value="UniProtKB-KW"/>
</dbReference>
<dbReference type="GO" id="GO:0039557">
    <property type="term" value="P:symbiont-mediated suppression of host cytoplasmic pattern recognition receptor signaling pathway via inhibition of IRF7 activity"/>
    <property type="evidence" value="ECO:0007669"/>
    <property type="project" value="UniProtKB-KW"/>
</dbReference>
<dbReference type="GO" id="GO:0039545">
    <property type="term" value="P:symbiont-mediated suppression of host cytoplasmic pattern recognition receptor signaling pathway via inhibition of MAVS activity"/>
    <property type="evidence" value="ECO:0007669"/>
    <property type="project" value="UniProtKB-KW"/>
</dbReference>
<dbReference type="GO" id="GO:0039540">
    <property type="term" value="P:symbiont-mediated suppression of host cytoplasmic pattern recognition receptor signaling pathway via inhibition of RIG-I activity"/>
    <property type="evidence" value="ECO:0007669"/>
    <property type="project" value="UniProtKB-KW"/>
</dbReference>
<dbReference type="GO" id="GO:0039723">
    <property type="term" value="P:symbiont-mediated suppression of host cytoplasmic pattern recognition receptor signaling pathway via inhibition of TBK1 activity"/>
    <property type="evidence" value="ECO:0007669"/>
    <property type="project" value="UniProtKB-KW"/>
</dbReference>
<dbReference type="GO" id="GO:0039564">
    <property type="term" value="P:symbiont-mediated suppression of host JAK-STAT cascade via inhibition of STAT2 activity"/>
    <property type="evidence" value="ECO:0007669"/>
    <property type="project" value="UniProtKB-KW"/>
</dbReference>
<dbReference type="GO" id="GO:0039722">
    <property type="term" value="P:symbiont-mediated suppression of host toll-like receptor signaling pathway"/>
    <property type="evidence" value="ECO:0007669"/>
    <property type="project" value="UniProtKB-KW"/>
</dbReference>
<dbReference type="GO" id="GO:0039502">
    <property type="term" value="P:symbiont-mediated suppression of host type I interferon-mediated signaling pathway"/>
    <property type="evidence" value="ECO:0007669"/>
    <property type="project" value="UniProtKB-KW"/>
</dbReference>
<dbReference type="InterPro" id="IPR005099">
    <property type="entry name" value="Pneumo_NS1"/>
</dbReference>
<dbReference type="Pfam" id="PF03438">
    <property type="entry name" value="Pneumo_NS1"/>
    <property type="match status" value="1"/>
</dbReference>
<comment type="function">
    <text evidence="1">Plays a major role in antagonizing the type I IFN-mediated antiviral response by degrading or inhibiting multiple cellular factors required for either IFN induction or response pathways. Acts cooperatively with NS2 to repress activation and nuclear translocation of host IFN-regulatory factor IRF3. Also disrupts the association of IRF3 with CREBBP. Interacts with host mitochondrial-associated membrane (MAM) MAVS and prevents the interaction with RIGI. Interacts with TRIM25 to suppress TRIM25-mediated RIGI ubiquitination and thereby RIGI-MAVS interaction. Together with NS2, participates in the proteasomal degradation of host STAT2, IRF3, IRF7, TBK1 and RIGI through a NS-degradasome involving CUL2 and Elongin-C. The degradasome requires an intact mitochondrial MAVS. Decreases the levels of host TRAF3 and IKBKE/IKK-epsilon. As functions other than disruptions of the type I IFN-mediated antiviral signaling pathways, induces host SOCS1 and SOCS3 expression. Suppresses premature apoptosis by an NF-kappa-B-dependent, interferon-independent mechanism and thus facilitates virus growth. Additionally, NS1 may serve some inhibitory role in viral transcription and RNA replication. Suppresses proliferation and activation of host CD103+ CD8+ cytotoxic T-lymphocytes and Th17 helper T-lymphocytes.</text>
</comment>
<comment type="subunit">
    <text evidence="1">Monomer. Homomultimer. Heteromultimer with NS2. Interacts with the matrix protein M. Interacts with host ELOC and CUL2; this interaction allows NS1 to form an active E3 ligase with ELOC and CUL2. Interacts with host IRF3; this interaction leads to the disrupted association of IRF3 with CREBBP and thus reduced binding of IRF3 to the IFN-beta promoter. Interacts with host MAVS; this interaction prevents MAVS binding to RIGI and inhibits signaling pathway leading to interferon production. Interacts with host TRIM25 (via SPRY domain); this interaction suppresses RIGI ubiquitination and results in decreased interaction between RIGI and MAVS.</text>
</comment>
<comment type="subcellular location">
    <subcellularLocation>
        <location evidence="1">Host cytoplasm</location>
    </subcellularLocation>
    <subcellularLocation>
        <location evidence="1">Host mitochondrion</location>
    </subcellularLocation>
    <subcellularLocation>
        <location evidence="1">Host nucleus</location>
    </subcellularLocation>
    <text evidence="1">Most NS1 resides in the mitochondria as a heteromer with NS2.</text>
</comment>
<comment type="similarity">
    <text evidence="2">Belongs to the pneumovirus non-structural protein 1 family.</text>
</comment>
<feature type="chain" id="PRO_0000142780" description="Non-structural protein 1">
    <location>
        <begin position="1"/>
        <end position="136"/>
    </location>
</feature>
<accession>Q65694</accession>
<accession>Q77L04</accession>
<gene>
    <name type="primary">1C</name>
    <name type="synonym">NS1</name>
</gene>
<reference key="1">
    <citation type="journal article" date="1995" name="J. Gen. Virol.">
        <title>Nucleotide sequence analysis of the non-structural NS1 (1C) and NS2 (1B) protein genes of bovine respiratory syncytial virus.</title>
        <authorList>
            <person name="Pastey M.K."/>
            <person name="Samal S.K."/>
        </authorList>
    </citation>
    <scope>NUCLEOTIDE SEQUENCE [MRNA]</scope>
</reference>
<reference key="2">
    <citation type="journal article" date="2001" name="Virus Genes">
        <title>Rescue of bovine respiratory syncytial virus from cloned cDNA: entire genome sequence of BRSV strain A51908.</title>
        <authorList>
            <person name="Yunus A.S."/>
            <person name="Khattar S.K."/>
            <person name="Collins P.L."/>
            <person name="Samal S.K."/>
        </authorList>
    </citation>
    <scope>NUCLEOTIDE SEQUENCE [GENOMIC RNA]</scope>
    <source>
        <strain>A51908</strain>
        <strain>ATCC 51908</strain>
    </source>
</reference>
<reference key="3">
    <citation type="journal article" date="2000" name="J. Virol.">
        <title>Bovine respiratory syncytial virus nonstructural proteins NS1 and NS2 cooperatively antagonize alpha/beta interferon-induced antiviral response.</title>
        <authorList>
            <person name="Schlender J."/>
            <person name="Bossert B."/>
            <person name="Buchholz U."/>
            <person name="Conzelmann K.K."/>
        </authorList>
    </citation>
    <scope>FUNCTION</scope>
</reference>
<reference key="4">
    <citation type="journal article" date="2003" name="J. Virol.">
        <title>Nonstructural proteins NS1 and NS2 of bovine respiratory syncytial virus block activation of interferon regulatory factor 3.</title>
        <authorList>
            <person name="Bossert B."/>
            <person name="Marozin S."/>
            <person name="Conzelmann K.K."/>
        </authorList>
    </citation>
    <scope>FUNCTION</scope>
</reference>